<keyword id="KW-0687">Ribonucleoprotein</keyword>
<keyword id="KW-0689">Ribosomal protein</keyword>
<sequence length="59" mass="6312">MAQIKITLTKSPIGRKPEQRKTVVALGLGKLNSSVVKEDNAAIRGMVNAISHLVTVEEA</sequence>
<accession>Q8E7S3</accession>
<dbReference type="EMBL" id="AL766843">
    <property type="protein sequence ID" value="CAD45721.1"/>
    <property type="molecule type" value="Genomic_DNA"/>
</dbReference>
<dbReference type="RefSeq" id="WP_000057245.1">
    <property type="nucleotide sequence ID" value="NC_004368.1"/>
</dbReference>
<dbReference type="SMR" id="Q8E7S3"/>
<dbReference type="GeneID" id="66885036"/>
<dbReference type="KEGG" id="san:rpmD"/>
<dbReference type="eggNOG" id="COG1841">
    <property type="taxonomic scope" value="Bacteria"/>
</dbReference>
<dbReference type="HOGENOM" id="CLU_131047_2_1_9"/>
<dbReference type="Proteomes" id="UP000000823">
    <property type="component" value="Chromosome"/>
</dbReference>
<dbReference type="GO" id="GO:0022625">
    <property type="term" value="C:cytosolic large ribosomal subunit"/>
    <property type="evidence" value="ECO:0007669"/>
    <property type="project" value="TreeGrafter"/>
</dbReference>
<dbReference type="GO" id="GO:0003735">
    <property type="term" value="F:structural constituent of ribosome"/>
    <property type="evidence" value="ECO:0007669"/>
    <property type="project" value="InterPro"/>
</dbReference>
<dbReference type="GO" id="GO:0006412">
    <property type="term" value="P:translation"/>
    <property type="evidence" value="ECO:0007669"/>
    <property type="project" value="UniProtKB-UniRule"/>
</dbReference>
<dbReference type="CDD" id="cd01658">
    <property type="entry name" value="Ribosomal_L30"/>
    <property type="match status" value="1"/>
</dbReference>
<dbReference type="FunFam" id="3.30.1390.20:FF:000001">
    <property type="entry name" value="50S ribosomal protein L30"/>
    <property type="match status" value="1"/>
</dbReference>
<dbReference type="Gene3D" id="3.30.1390.20">
    <property type="entry name" value="Ribosomal protein L30, ferredoxin-like fold domain"/>
    <property type="match status" value="1"/>
</dbReference>
<dbReference type="HAMAP" id="MF_01371_B">
    <property type="entry name" value="Ribosomal_uL30_B"/>
    <property type="match status" value="1"/>
</dbReference>
<dbReference type="InterPro" id="IPR036919">
    <property type="entry name" value="Ribo_uL30_ferredoxin-like_sf"/>
</dbReference>
<dbReference type="InterPro" id="IPR005996">
    <property type="entry name" value="Ribosomal_uL30_bac-type"/>
</dbReference>
<dbReference type="InterPro" id="IPR018038">
    <property type="entry name" value="Ribosomal_uL30_CS"/>
</dbReference>
<dbReference type="InterPro" id="IPR016082">
    <property type="entry name" value="Ribosomal_uL30_ferredoxin-like"/>
</dbReference>
<dbReference type="NCBIfam" id="TIGR01308">
    <property type="entry name" value="rpmD_bact"/>
    <property type="match status" value="1"/>
</dbReference>
<dbReference type="PANTHER" id="PTHR15892:SF2">
    <property type="entry name" value="LARGE RIBOSOMAL SUBUNIT PROTEIN UL30M"/>
    <property type="match status" value="1"/>
</dbReference>
<dbReference type="PANTHER" id="PTHR15892">
    <property type="entry name" value="MITOCHONDRIAL RIBOSOMAL PROTEIN L30"/>
    <property type="match status" value="1"/>
</dbReference>
<dbReference type="Pfam" id="PF00327">
    <property type="entry name" value="Ribosomal_L30"/>
    <property type="match status" value="1"/>
</dbReference>
<dbReference type="PIRSF" id="PIRSF002211">
    <property type="entry name" value="Ribosomal_L30_bac-type"/>
    <property type="match status" value="1"/>
</dbReference>
<dbReference type="SUPFAM" id="SSF55129">
    <property type="entry name" value="Ribosomal protein L30p/L7e"/>
    <property type="match status" value="1"/>
</dbReference>
<dbReference type="PROSITE" id="PS00634">
    <property type="entry name" value="RIBOSOMAL_L30"/>
    <property type="match status" value="1"/>
</dbReference>
<comment type="subunit">
    <text evidence="1">Part of the 50S ribosomal subunit.</text>
</comment>
<comment type="similarity">
    <text evidence="1">Belongs to the universal ribosomal protein uL30 family.</text>
</comment>
<evidence type="ECO:0000255" key="1">
    <source>
        <dbReference type="HAMAP-Rule" id="MF_01371"/>
    </source>
</evidence>
<evidence type="ECO:0000305" key="2"/>
<gene>
    <name evidence="1" type="primary">rpmD</name>
    <name type="ordered locus">gbs0076</name>
</gene>
<proteinExistence type="inferred from homology"/>
<name>RL30_STRA3</name>
<protein>
    <recommendedName>
        <fullName evidence="1">Large ribosomal subunit protein uL30</fullName>
    </recommendedName>
    <alternativeName>
        <fullName evidence="2">50S ribosomal protein L30</fullName>
    </alternativeName>
</protein>
<reference key="1">
    <citation type="journal article" date="2002" name="Mol. Microbiol.">
        <title>Genome sequence of Streptococcus agalactiae, a pathogen causing invasive neonatal disease.</title>
        <authorList>
            <person name="Glaser P."/>
            <person name="Rusniok C."/>
            <person name="Buchrieser C."/>
            <person name="Chevalier F."/>
            <person name="Frangeul L."/>
            <person name="Msadek T."/>
            <person name="Zouine M."/>
            <person name="Couve E."/>
            <person name="Lalioui L."/>
            <person name="Poyart C."/>
            <person name="Trieu-Cuot P."/>
            <person name="Kunst F."/>
        </authorList>
    </citation>
    <scope>NUCLEOTIDE SEQUENCE [LARGE SCALE GENOMIC DNA]</scope>
    <source>
        <strain>NEM316</strain>
    </source>
</reference>
<organism>
    <name type="scientific">Streptococcus agalactiae serotype III (strain NEM316)</name>
    <dbReference type="NCBI Taxonomy" id="211110"/>
    <lineage>
        <taxon>Bacteria</taxon>
        <taxon>Bacillati</taxon>
        <taxon>Bacillota</taxon>
        <taxon>Bacilli</taxon>
        <taxon>Lactobacillales</taxon>
        <taxon>Streptococcaceae</taxon>
        <taxon>Streptococcus</taxon>
    </lineage>
</organism>
<feature type="chain" id="PRO_0000273863" description="Large ribosomal subunit protein uL30">
    <location>
        <begin position="1"/>
        <end position="59"/>
    </location>
</feature>